<reference key="1">
    <citation type="submission" date="2006-10" db="EMBL/GenBank/DDBJ databases">
        <authorList>
            <person name="Fleischmann R.D."/>
            <person name="Dodson R.J."/>
            <person name="Haft D.H."/>
            <person name="Merkel J.S."/>
            <person name="Nelson W.C."/>
            <person name="Fraser C.M."/>
        </authorList>
    </citation>
    <scope>NUCLEOTIDE SEQUENCE [LARGE SCALE GENOMIC DNA]</scope>
    <source>
        <strain>104</strain>
    </source>
</reference>
<proteinExistence type="inferred from homology"/>
<evidence type="ECO:0000250" key="1"/>
<evidence type="ECO:0000305" key="2"/>
<feature type="chain" id="PRO_0000361108" description="Putative S-adenosyl-L-methionine-dependent methyltransferase MAV_4441">
    <location>
        <begin position="1"/>
        <end position="314"/>
    </location>
</feature>
<feature type="binding site" evidence="1">
    <location>
        <position position="138"/>
    </location>
    <ligand>
        <name>S-adenosyl-L-methionine</name>
        <dbReference type="ChEBI" id="CHEBI:59789"/>
    </ligand>
</feature>
<feature type="binding site" evidence="1">
    <location>
        <begin position="167"/>
        <end position="168"/>
    </location>
    <ligand>
        <name>S-adenosyl-L-methionine</name>
        <dbReference type="ChEBI" id="CHEBI:59789"/>
    </ligand>
</feature>
<organism>
    <name type="scientific">Mycobacterium avium (strain 104)</name>
    <dbReference type="NCBI Taxonomy" id="243243"/>
    <lineage>
        <taxon>Bacteria</taxon>
        <taxon>Bacillati</taxon>
        <taxon>Actinomycetota</taxon>
        <taxon>Actinomycetes</taxon>
        <taxon>Mycobacteriales</taxon>
        <taxon>Mycobacteriaceae</taxon>
        <taxon>Mycobacterium</taxon>
        <taxon>Mycobacterium avium complex (MAC)</taxon>
    </lineage>
</organism>
<protein>
    <recommendedName>
        <fullName>Putative S-adenosyl-L-methionine-dependent methyltransferase MAV_4441</fullName>
        <ecNumber>2.1.1.-</ecNumber>
    </recommendedName>
</protein>
<keyword id="KW-0489">Methyltransferase</keyword>
<keyword id="KW-0949">S-adenosyl-L-methionine</keyword>
<keyword id="KW-0808">Transferase</keyword>
<dbReference type="EC" id="2.1.1.-"/>
<dbReference type="EMBL" id="CP000479">
    <property type="protein sequence ID" value="ABK68846.1"/>
    <property type="molecule type" value="Genomic_DNA"/>
</dbReference>
<dbReference type="RefSeq" id="WP_011726069.1">
    <property type="nucleotide sequence ID" value="NC_008595.1"/>
</dbReference>
<dbReference type="SMR" id="A0QKY8"/>
<dbReference type="KEGG" id="mav:MAV_4441"/>
<dbReference type="HOGENOM" id="CLU_056160_2_1_11"/>
<dbReference type="Proteomes" id="UP000001574">
    <property type="component" value="Chromosome"/>
</dbReference>
<dbReference type="GO" id="GO:0008168">
    <property type="term" value="F:methyltransferase activity"/>
    <property type="evidence" value="ECO:0007669"/>
    <property type="project" value="UniProtKB-KW"/>
</dbReference>
<dbReference type="GO" id="GO:0032259">
    <property type="term" value="P:methylation"/>
    <property type="evidence" value="ECO:0007669"/>
    <property type="project" value="UniProtKB-KW"/>
</dbReference>
<dbReference type="FunFam" id="3.40.50.150:FF:000152">
    <property type="entry name" value="S-adenosyl-L-methionine-dependent methyltransferase"/>
    <property type="match status" value="1"/>
</dbReference>
<dbReference type="Gene3D" id="3.40.50.150">
    <property type="entry name" value="Vaccinia Virus protein VP39"/>
    <property type="match status" value="1"/>
</dbReference>
<dbReference type="InterPro" id="IPR007213">
    <property type="entry name" value="Ppm1/Ppm2/Tcmp"/>
</dbReference>
<dbReference type="InterPro" id="IPR029063">
    <property type="entry name" value="SAM-dependent_MTases_sf"/>
</dbReference>
<dbReference type="InterPro" id="IPR011610">
    <property type="entry name" value="SAM_mthyl_Trfase_ML2640-like"/>
</dbReference>
<dbReference type="NCBIfam" id="TIGR00027">
    <property type="entry name" value="mthyl_TIGR00027"/>
    <property type="match status" value="1"/>
</dbReference>
<dbReference type="PANTHER" id="PTHR43619">
    <property type="entry name" value="S-ADENOSYL-L-METHIONINE-DEPENDENT METHYLTRANSFERASE YKTD-RELATED"/>
    <property type="match status" value="1"/>
</dbReference>
<dbReference type="PANTHER" id="PTHR43619:SF2">
    <property type="entry name" value="S-ADENOSYL-L-METHIONINE-DEPENDENT METHYLTRANSFERASES SUPERFAMILY PROTEIN"/>
    <property type="match status" value="1"/>
</dbReference>
<dbReference type="Pfam" id="PF04072">
    <property type="entry name" value="LCM"/>
    <property type="match status" value="1"/>
</dbReference>
<dbReference type="SUPFAM" id="SSF53335">
    <property type="entry name" value="S-adenosyl-L-methionine-dependent methyltransferases"/>
    <property type="match status" value="1"/>
</dbReference>
<sequence>MTSTRYEGDTWDLASSVGVTATMVAAARAMATRADNPLINDPFAEPLVKAVGVDLLSRLAGGELDPAELNDVHDGAAGSAGAMSRMADNMAVRTKFFDEFFLNATKAGIAQVVILASGLDARAYRLAWPAGTVVYEVDQPQVIDFKTTALAQLGAAPTAERRVVAVDLRDDWPAALRAAGFDPTRPTAWSAEGLLGYLPPEAQDRLLDTITELSAPGSRLATESAPNPAPGEEEKLKERMQAISQRWRAHGFDLDMAGLVYFGERNEAAPYLAGHGWRLNSVTIRDLFAANGLDPLDDDDTRMGEMLYTWGIYE</sequence>
<comment type="function">
    <text evidence="1">Exhibits S-adenosyl-L-methionine-dependent methyltransferase activity.</text>
</comment>
<comment type="similarity">
    <text evidence="2">Belongs to the UPF0677 family.</text>
</comment>
<accession>A0QKY8</accession>
<gene>
    <name type="ordered locus">MAV_4441</name>
</gene>
<name>Y4441_MYCA1</name>